<name>HUTP_BACAH</name>
<gene>
    <name evidence="1" type="primary">hutP</name>
    <name type="ordered locus">BALH_3288</name>
</gene>
<organism>
    <name type="scientific">Bacillus thuringiensis (strain Al Hakam)</name>
    <dbReference type="NCBI Taxonomy" id="412694"/>
    <lineage>
        <taxon>Bacteria</taxon>
        <taxon>Bacillati</taxon>
        <taxon>Bacillota</taxon>
        <taxon>Bacilli</taxon>
        <taxon>Bacillales</taxon>
        <taxon>Bacillaceae</taxon>
        <taxon>Bacillus</taxon>
        <taxon>Bacillus cereus group</taxon>
    </lineage>
</organism>
<sequence length="146" mass="15822">MLLQGTHRIGRMAMLLALADENESPVLSIPKGWKYCTGKVGSMNSQKVVAAMETAAKSNQVIETDVYRETHALYHAIMEALYGVTRGQIQLADVLRTVGLRFAIVRGTPYDGKKEGEWVAVALYGTIGAPVKGSEHEAIGLGINHI</sequence>
<comment type="function">
    <text evidence="1">Antiterminator that binds to cis-acting regulatory sequences on the mRNA in the presence of histidine, thereby suppressing transcription termination and activating the hut operon for histidine utilization.</text>
</comment>
<comment type="subunit">
    <text evidence="1">Homohexamer.</text>
</comment>
<comment type="similarity">
    <text evidence="1">Belongs to the HutP family.</text>
</comment>
<evidence type="ECO:0000255" key="1">
    <source>
        <dbReference type="HAMAP-Rule" id="MF_00779"/>
    </source>
</evidence>
<accession>A0RH40</accession>
<dbReference type="EMBL" id="CP000485">
    <property type="protein sequence ID" value="ABK86533.1"/>
    <property type="molecule type" value="Genomic_DNA"/>
</dbReference>
<dbReference type="RefSeq" id="WP_000926516.1">
    <property type="nucleotide sequence ID" value="NC_008600.1"/>
</dbReference>
<dbReference type="SMR" id="A0RH40"/>
<dbReference type="GeneID" id="93007528"/>
<dbReference type="KEGG" id="btl:BALH_3288"/>
<dbReference type="HOGENOM" id="CLU_148478_0_0_9"/>
<dbReference type="GO" id="GO:0003729">
    <property type="term" value="F:mRNA binding"/>
    <property type="evidence" value="ECO:0007669"/>
    <property type="project" value="UniProtKB-UniRule"/>
</dbReference>
<dbReference type="GO" id="GO:0006547">
    <property type="term" value="P:L-histidine metabolic process"/>
    <property type="evidence" value="ECO:0007669"/>
    <property type="project" value="UniProtKB-UniRule"/>
</dbReference>
<dbReference type="GO" id="GO:0010628">
    <property type="term" value="P:positive regulation of gene expression"/>
    <property type="evidence" value="ECO:0007669"/>
    <property type="project" value="UniProtKB-UniRule"/>
</dbReference>
<dbReference type="FunFam" id="3.40.1510.10:FF:000001">
    <property type="entry name" value="Hut operon positive regulatory protein"/>
    <property type="match status" value="1"/>
</dbReference>
<dbReference type="Gene3D" id="3.40.1510.10">
    <property type="entry name" value="Hut operon regulatory protein HutP"/>
    <property type="match status" value="1"/>
</dbReference>
<dbReference type="HAMAP" id="MF_00779">
    <property type="entry name" value="HutP"/>
    <property type="match status" value="1"/>
</dbReference>
<dbReference type="InterPro" id="IPR015111">
    <property type="entry name" value="Regulatory_HutP"/>
</dbReference>
<dbReference type="InterPro" id="IPR023552">
    <property type="entry name" value="Regulatory_HutP_bacillales"/>
</dbReference>
<dbReference type="InterPro" id="IPR036482">
    <property type="entry name" value="Regulatory_HutP_sf"/>
</dbReference>
<dbReference type="NCBIfam" id="NF002838">
    <property type="entry name" value="PRK03065.1"/>
    <property type="match status" value="1"/>
</dbReference>
<dbReference type="Pfam" id="PF09021">
    <property type="entry name" value="HutP"/>
    <property type="match status" value="1"/>
</dbReference>
<dbReference type="SUPFAM" id="SSF111064">
    <property type="entry name" value="Hut operon positive regulatory protein HutP"/>
    <property type="match status" value="1"/>
</dbReference>
<feature type="chain" id="PRO_1000046820" description="Hut operon positive regulatory protein">
    <location>
        <begin position="1"/>
        <end position="146"/>
    </location>
</feature>
<protein>
    <recommendedName>
        <fullName evidence="1">Hut operon positive regulatory protein</fullName>
    </recommendedName>
</protein>
<reference key="1">
    <citation type="journal article" date="2007" name="J. Bacteriol.">
        <title>The complete genome sequence of Bacillus thuringiensis Al Hakam.</title>
        <authorList>
            <person name="Challacombe J.F."/>
            <person name="Altherr M.R."/>
            <person name="Xie G."/>
            <person name="Bhotika S.S."/>
            <person name="Brown N."/>
            <person name="Bruce D."/>
            <person name="Campbell C.S."/>
            <person name="Campbell M.L."/>
            <person name="Chen J."/>
            <person name="Chertkov O."/>
            <person name="Cleland C."/>
            <person name="Dimitrijevic M."/>
            <person name="Doggett N.A."/>
            <person name="Fawcett J.J."/>
            <person name="Glavina T."/>
            <person name="Goodwin L.A."/>
            <person name="Green L.D."/>
            <person name="Han C.S."/>
            <person name="Hill K.K."/>
            <person name="Hitchcock P."/>
            <person name="Jackson P.J."/>
            <person name="Keim P."/>
            <person name="Kewalramani A.R."/>
            <person name="Longmire J."/>
            <person name="Lucas S."/>
            <person name="Malfatti S."/>
            <person name="Martinez D."/>
            <person name="McMurry K."/>
            <person name="Meincke L.J."/>
            <person name="Misra M."/>
            <person name="Moseman B.L."/>
            <person name="Mundt M."/>
            <person name="Munk A.C."/>
            <person name="Okinaka R.T."/>
            <person name="Parson-Quintana B."/>
            <person name="Reilly L.P."/>
            <person name="Richardson P."/>
            <person name="Robinson D.L."/>
            <person name="Saunders E."/>
            <person name="Tapia R."/>
            <person name="Tesmer J.G."/>
            <person name="Thayer N."/>
            <person name="Thompson L.S."/>
            <person name="Tice H."/>
            <person name="Ticknor L.O."/>
            <person name="Wills P.L."/>
            <person name="Gilna P."/>
            <person name="Brettin T.S."/>
        </authorList>
    </citation>
    <scope>NUCLEOTIDE SEQUENCE [LARGE SCALE GENOMIC DNA]</scope>
    <source>
        <strain>Al Hakam</strain>
    </source>
</reference>
<proteinExistence type="inferred from homology"/>
<keyword id="KW-0010">Activator</keyword>
<keyword id="KW-0369">Histidine metabolism</keyword>
<keyword id="KW-0694">RNA-binding</keyword>
<keyword id="KW-0804">Transcription</keyword>
<keyword id="KW-0805">Transcription regulation</keyword>